<accession>Q0U2J8</accession>
<proteinExistence type="inferred from homology"/>
<protein>
    <recommendedName>
        <fullName>Autophagy-related protein 18</fullName>
    </recommendedName>
</protein>
<feature type="chain" id="PRO_0000318005" description="Autophagy-related protein 18">
    <location>
        <begin position="1"/>
        <end position="414"/>
    </location>
</feature>
<feature type="repeat" description="WD 1">
    <location>
        <begin position="1"/>
        <end position="34"/>
    </location>
</feature>
<feature type="repeat" description="WD 2">
    <location>
        <begin position="69"/>
        <end position="114"/>
    </location>
</feature>
<feature type="repeat" description="WD 3">
    <location>
        <begin position="139"/>
        <end position="182"/>
    </location>
</feature>
<feature type="repeat" description="WD 4">
    <location>
        <begin position="185"/>
        <end position="225"/>
    </location>
</feature>
<feature type="repeat" description="WD 5">
    <location>
        <begin position="230"/>
        <end position="269"/>
    </location>
</feature>
<feature type="repeat" description="WD 6">
    <location>
        <begin position="317"/>
        <end position="359"/>
    </location>
</feature>
<feature type="repeat" description="WD 7">
    <location>
        <begin position="367"/>
        <end position="407"/>
    </location>
</feature>
<feature type="region of interest" description="Disordered" evidence="3">
    <location>
        <begin position="267"/>
        <end position="310"/>
    </location>
</feature>
<feature type="short sequence motif" description="L/FRRG motif" evidence="2">
    <location>
        <begin position="226"/>
        <end position="230"/>
    </location>
</feature>
<feature type="compositionally biased region" description="Polar residues" evidence="3">
    <location>
        <begin position="267"/>
        <end position="276"/>
    </location>
</feature>
<feature type="compositionally biased region" description="Low complexity" evidence="3">
    <location>
        <begin position="277"/>
        <end position="290"/>
    </location>
</feature>
<sequence>MNFVTFNQDHSHLGVGTSNGYRVYTTDPFNKQSESREGDVSSLEMLFSTSLVALTLSPRVLRIQNTKGKRHSTICEMTFRTAILAMRLNRKRLVVVLESELYIYDISNMQMLRTEKTSPNPNAICALSASSENNYLIYPLPTKAAPATFQPPSHAPPKSDHIAPTSGEILIYDATKMEAVNVIEAHNSPLSCIALNNDGTLLATASEKGTIIRVFSIPDAQKLYQFRRGSIPARIFSMSFNSTSTLLSVSSATETVHIFRLGAPNTSRSNSISSGPTTLLSTSHQRSSSRTSEDISDEFGSSTADMAASERKPLNPTFASMIRRTSQTVGKSFAATVGGYLPSAVAEIWEPSRDFAWVKVPRSPNAASAGPVRTVVALSNNGPQIMVVTSEGNYYVFNVDLEKGGEGTLYKQYS</sequence>
<dbReference type="EMBL" id="CH445353">
    <property type="protein sequence ID" value="EAT78660.2"/>
    <property type="molecule type" value="Genomic_DNA"/>
</dbReference>
<dbReference type="RefSeq" id="XP_001804234.1">
    <property type="nucleotide sequence ID" value="XM_001804182.1"/>
</dbReference>
<dbReference type="SMR" id="Q0U2J8"/>
<dbReference type="FunCoup" id="Q0U2J8">
    <property type="interactions" value="515"/>
</dbReference>
<dbReference type="STRING" id="321614.Q0U2J8"/>
<dbReference type="EnsemblFungi" id="SNOT_14035">
    <property type="protein sequence ID" value="SNOT_14035"/>
    <property type="gene ID" value="SNOG_14035"/>
</dbReference>
<dbReference type="GeneID" id="5981157"/>
<dbReference type="KEGG" id="pno:SNOG_14035"/>
<dbReference type="VEuPathDB" id="FungiDB:JI435_140350"/>
<dbReference type="eggNOG" id="KOG2110">
    <property type="taxonomic scope" value="Eukaryota"/>
</dbReference>
<dbReference type="HOGENOM" id="CLU_025895_5_0_1"/>
<dbReference type="InParanoid" id="Q0U2J8"/>
<dbReference type="Proteomes" id="UP000001055">
    <property type="component" value="Unassembled WGS sequence"/>
</dbReference>
<dbReference type="GO" id="GO:0005829">
    <property type="term" value="C:cytosol"/>
    <property type="evidence" value="ECO:0000318"/>
    <property type="project" value="GO_Central"/>
</dbReference>
<dbReference type="GO" id="GO:0010008">
    <property type="term" value="C:endosome membrane"/>
    <property type="evidence" value="ECO:0007669"/>
    <property type="project" value="UniProtKB-SubCell"/>
</dbReference>
<dbReference type="GO" id="GO:0000329">
    <property type="term" value="C:fungal-type vacuole membrane"/>
    <property type="evidence" value="ECO:0000318"/>
    <property type="project" value="GO_Central"/>
</dbReference>
<dbReference type="GO" id="GO:0034045">
    <property type="term" value="C:phagophore assembly site membrane"/>
    <property type="evidence" value="ECO:0000318"/>
    <property type="project" value="GO_Central"/>
</dbReference>
<dbReference type="GO" id="GO:0080025">
    <property type="term" value="F:phosphatidylinositol-3,5-bisphosphate binding"/>
    <property type="evidence" value="ECO:0000318"/>
    <property type="project" value="GO_Central"/>
</dbReference>
<dbReference type="GO" id="GO:0032266">
    <property type="term" value="F:phosphatidylinositol-3-phosphate binding"/>
    <property type="evidence" value="ECO:0000318"/>
    <property type="project" value="GO_Central"/>
</dbReference>
<dbReference type="GO" id="GO:0030674">
    <property type="term" value="F:protein-macromolecule adaptor activity"/>
    <property type="evidence" value="ECO:0000318"/>
    <property type="project" value="GO_Central"/>
</dbReference>
<dbReference type="GO" id="GO:0000422">
    <property type="term" value="P:autophagy of mitochondrion"/>
    <property type="evidence" value="ECO:0000318"/>
    <property type="project" value="GO_Central"/>
</dbReference>
<dbReference type="GO" id="GO:0061723">
    <property type="term" value="P:glycophagy"/>
    <property type="evidence" value="ECO:0000318"/>
    <property type="project" value="GO_Central"/>
</dbReference>
<dbReference type="GO" id="GO:0044804">
    <property type="term" value="P:nucleophagy"/>
    <property type="evidence" value="ECO:0000318"/>
    <property type="project" value="GO_Central"/>
</dbReference>
<dbReference type="GO" id="GO:0000425">
    <property type="term" value="P:pexophagy"/>
    <property type="evidence" value="ECO:0000318"/>
    <property type="project" value="GO_Central"/>
</dbReference>
<dbReference type="GO" id="GO:0034497">
    <property type="term" value="P:protein localization to phagophore assembly site"/>
    <property type="evidence" value="ECO:0000318"/>
    <property type="project" value="GO_Central"/>
</dbReference>
<dbReference type="GO" id="GO:0015031">
    <property type="term" value="P:protein transport"/>
    <property type="evidence" value="ECO:0007669"/>
    <property type="project" value="UniProtKB-KW"/>
</dbReference>
<dbReference type="Gene3D" id="2.130.10.10">
    <property type="entry name" value="YVTN repeat-like/Quinoprotein amine dehydrogenase"/>
    <property type="match status" value="1"/>
</dbReference>
<dbReference type="InterPro" id="IPR048720">
    <property type="entry name" value="PROPPIN"/>
</dbReference>
<dbReference type="InterPro" id="IPR015943">
    <property type="entry name" value="WD40/YVTN_repeat-like_dom_sf"/>
</dbReference>
<dbReference type="InterPro" id="IPR036322">
    <property type="entry name" value="WD40_repeat_dom_sf"/>
</dbReference>
<dbReference type="InterPro" id="IPR001680">
    <property type="entry name" value="WD40_rpt"/>
</dbReference>
<dbReference type="PANTHER" id="PTHR11227">
    <property type="entry name" value="WD-REPEAT PROTEIN INTERACTING WITH PHOSPHOINOSIDES WIPI -RELATED"/>
    <property type="match status" value="1"/>
</dbReference>
<dbReference type="Pfam" id="PF21032">
    <property type="entry name" value="PROPPIN"/>
    <property type="match status" value="2"/>
</dbReference>
<dbReference type="SMART" id="SM00320">
    <property type="entry name" value="WD40"/>
    <property type="match status" value="2"/>
</dbReference>
<dbReference type="SUPFAM" id="SSF50978">
    <property type="entry name" value="WD40 repeat-like"/>
    <property type="match status" value="1"/>
</dbReference>
<keyword id="KW-0072">Autophagy</keyword>
<keyword id="KW-0967">Endosome</keyword>
<keyword id="KW-0472">Membrane</keyword>
<keyword id="KW-0653">Protein transport</keyword>
<keyword id="KW-0677">Repeat</keyword>
<keyword id="KW-0813">Transport</keyword>
<keyword id="KW-0926">Vacuole</keyword>
<keyword id="KW-0853">WD repeat</keyword>
<evidence type="ECO:0000250" key="1"/>
<evidence type="ECO:0000250" key="2">
    <source>
        <dbReference type="UniProtKB" id="P43601"/>
    </source>
</evidence>
<evidence type="ECO:0000256" key="3">
    <source>
        <dbReference type="SAM" id="MobiDB-lite"/>
    </source>
</evidence>
<evidence type="ECO:0000305" key="4"/>
<reference key="1">
    <citation type="journal article" date="2007" name="Plant Cell">
        <title>Dothideomycete-plant interactions illuminated by genome sequencing and EST analysis of the wheat pathogen Stagonospora nodorum.</title>
        <authorList>
            <person name="Hane J.K."/>
            <person name="Lowe R.G.T."/>
            <person name="Solomon P.S."/>
            <person name="Tan K.-C."/>
            <person name="Schoch C.L."/>
            <person name="Spatafora J.W."/>
            <person name="Crous P.W."/>
            <person name="Kodira C.D."/>
            <person name="Birren B.W."/>
            <person name="Galagan J.E."/>
            <person name="Torriani S.F.F."/>
            <person name="McDonald B.A."/>
            <person name="Oliver R.P."/>
        </authorList>
    </citation>
    <scope>NUCLEOTIDE SEQUENCE [LARGE SCALE GENOMIC DNA]</scope>
    <source>
        <strain>SN15 / ATCC MYA-4574 / FGSC 10173</strain>
    </source>
</reference>
<organism>
    <name type="scientific">Phaeosphaeria nodorum (strain SN15 / ATCC MYA-4574 / FGSC 10173)</name>
    <name type="common">Glume blotch fungus</name>
    <name type="synonym">Parastagonospora nodorum</name>
    <dbReference type="NCBI Taxonomy" id="321614"/>
    <lineage>
        <taxon>Eukaryota</taxon>
        <taxon>Fungi</taxon>
        <taxon>Dikarya</taxon>
        <taxon>Ascomycota</taxon>
        <taxon>Pezizomycotina</taxon>
        <taxon>Dothideomycetes</taxon>
        <taxon>Pleosporomycetidae</taxon>
        <taxon>Pleosporales</taxon>
        <taxon>Pleosporineae</taxon>
        <taxon>Phaeosphaeriaceae</taxon>
        <taxon>Parastagonospora</taxon>
    </lineage>
</organism>
<name>ATG18_PHANO</name>
<comment type="function">
    <text evidence="1">The PI(3,5)P2 regulatory complex regulates both the synthesis and turnover of phosphatidylinositol 3,5-bisphosphate (PtdIns(3,5)P2). Necessary for proper vacuole morphology. Plays an important role in osmotically-induced vacuole fragmentation. Required for cytoplasm to vacuole transport (Cvt) vesicle formation, pexophagy and starvation-induced autophagy. Involved in correct ATG9 trafficking to the pre-autophagosomal structure. Might also be involved in premeiotic DNA replication (By similarity).</text>
</comment>
<comment type="subunit">
    <text evidence="1">Component of the PI(3,5)P2 regulatory complex.</text>
</comment>
<comment type="subcellular location">
    <subcellularLocation>
        <location evidence="1">Preautophagosomal structure membrane</location>
        <topology evidence="1">Peripheral membrane protein</topology>
    </subcellularLocation>
    <subcellularLocation>
        <location evidence="1">Vacuole membrane</location>
        <topology evidence="1">Peripheral membrane protein</topology>
    </subcellularLocation>
    <subcellularLocation>
        <location evidence="1">Endosome membrane</location>
        <topology evidence="1">Peripheral membrane protein</topology>
    </subcellularLocation>
</comment>
<comment type="domain">
    <text evidence="1">The N-terminus might form a beta-propeller domain involved in specific binding to phosphatidylinositol 3,5-bisphosphate (PIP2), leading to the association of the protein to the membrane.</text>
</comment>
<comment type="domain">
    <text evidence="2">The L/FRRG motif is essential for the cytoplasm to vacuole transport (Cvt) pathway, for the recruitment of ATG8 and ATG16 to the PAS in nutrient-rich medium, and for its recruitment to and dissociation from the PAS under starvation conditions.</text>
</comment>
<comment type="similarity">
    <text evidence="4">Belongs to the WD repeat PROPPIN family.</text>
</comment>
<gene>
    <name type="primary">ATG18</name>
    <name type="ORF">SNOG_14035</name>
</gene>